<comment type="function">
    <text>In the hair cortex, hair keratin intermediate filaments are embedded in an interfilamentous matrix, consisting of hair keratin-associated proteins (KRTAP), which are essential for the formation of a rigid and resistant hair shaft through their extensive disulfide bond cross-linking with abundant cysteine residues of hair keratins. The matrix proteins include the high-sulfur and high-glycine-tyrosine keratins.</text>
</comment>
<comment type="subunit">
    <text evidence="1">Interacts with hair keratins.</text>
</comment>
<comment type="similarity">
    <text evidence="2">Belongs to the KRTAP type 20 family.</text>
</comment>
<reference key="1">
    <citation type="submission" date="2002-11" db="EMBL/GenBank/DDBJ databases">
        <title>Identification of complete keratin-associated protein (KAP) gene cluster spanning 800 kb region on human chromosome 21q22.11.</title>
        <authorList>
            <person name="Obayashi I."/>
            <person name="Shibuya K."/>
            <person name="Minoshima S."/>
            <person name="Kudoh J."/>
            <person name="Shimizu N."/>
        </authorList>
    </citation>
    <scope>NUCLEOTIDE SEQUENCE [MRNA]</scope>
    <source>
        <tissue>Hair root</tissue>
    </source>
</reference>
<reference key="2">
    <citation type="journal article" date="2004" name="Genome Res.">
        <title>The status, quality, and expansion of the NIH full-length cDNA project: the Mammalian Gene Collection (MGC).</title>
        <authorList>
            <consortium name="The MGC Project Team"/>
        </authorList>
    </citation>
    <scope>NUCLEOTIDE SEQUENCE [LARGE SCALE MRNA]</scope>
</reference>
<evidence type="ECO:0000250" key="1"/>
<evidence type="ECO:0000305" key="2"/>
<keyword id="KW-0416">Keratin</keyword>
<keyword id="KW-1267">Proteomics identification</keyword>
<keyword id="KW-1185">Reference proteome</keyword>
<keyword id="KW-0677">Repeat</keyword>
<name>KR202_HUMAN</name>
<sequence length="65" mass="6961">MCYYSNYYGGLRYGYGVLGGGYGCGCGYGHGYGGLGCGYGRGYGGYGYGCCRPSCYGRYWSCGFY</sequence>
<proteinExistence type="evidence at protein level"/>
<dbReference type="EMBL" id="AB096957">
    <property type="protein sequence ID" value="BAE46372.1"/>
    <property type="molecule type" value="mRNA"/>
</dbReference>
<dbReference type="EMBL" id="BC111084">
    <property type="protein sequence ID" value="AAI11085.1"/>
    <property type="molecule type" value="mRNA"/>
</dbReference>
<dbReference type="CCDS" id="CCDS13604.1"/>
<dbReference type="RefSeq" id="NP_853647.1">
    <property type="nucleotide sequence ID" value="NM_181616.3"/>
</dbReference>
<dbReference type="FunCoup" id="Q3LI61">
    <property type="interactions" value="12"/>
</dbReference>
<dbReference type="STRING" id="9606.ENSP00000330746"/>
<dbReference type="iPTMnet" id="Q3LI61"/>
<dbReference type="PhosphoSitePlus" id="Q3LI61"/>
<dbReference type="BioMuta" id="KRTAP20-2"/>
<dbReference type="DMDM" id="88909175"/>
<dbReference type="MassIVE" id="Q3LI61"/>
<dbReference type="PaxDb" id="9606-ENSP00000330746"/>
<dbReference type="PeptideAtlas" id="Q3LI61"/>
<dbReference type="ProteomicsDB" id="61762"/>
<dbReference type="DNASU" id="337976"/>
<dbReference type="Ensembl" id="ENST00000330798.3">
    <property type="protein sequence ID" value="ENSP00000330746.2"/>
    <property type="gene ID" value="ENSG00000184032.3"/>
</dbReference>
<dbReference type="GeneID" id="337976"/>
<dbReference type="KEGG" id="hsa:337976"/>
<dbReference type="MANE-Select" id="ENST00000330798.3">
    <property type="protein sequence ID" value="ENSP00000330746.2"/>
    <property type="RefSeq nucleotide sequence ID" value="NM_181616.3"/>
    <property type="RefSeq protein sequence ID" value="NP_853647.1"/>
</dbReference>
<dbReference type="UCSC" id="uc011adg.3">
    <property type="organism name" value="human"/>
</dbReference>
<dbReference type="AGR" id="HGNC:18944"/>
<dbReference type="CTD" id="337976"/>
<dbReference type="GeneCards" id="KRTAP20-2"/>
<dbReference type="HGNC" id="HGNC:18944">
    <property type="gene designation" value="KRTAP20-2"/>
</dbReference>
<dbReference type="HPA" id="ENSG00000184032">
    <property type="expression patterns" value="Tissue enriched (skin)"/>
</dbReference>
<dbReference type="neXtProt" id="NX_Q3LI61"/>
<dbReference type="PharmGKB" id="PA134896461"/>
<dbReference type="VEuPathDB" id="HostDB:ENSG00000184032"/>
<dbReference type="eggNOG" id="ENOG502TDP8">
    <property type="taxonomic scope" value="Eukaryota"/>
</dbReference>
<dbReference type="GeneTree" id="ENSGT00950000186539"/>
<dbReference type="HOGENOM" id="CLU_184630_3_0_1"/>
<dbReference type="InParanoid" id="Q3LI61"/>
<dbReference type="OMA" id="DILIHYY"/>
<dbReference type="PAN-GO" id="Q3LI61">
    <property type="GO annotations" value="0 GO annotations based on evolutionary models"/>
</dbReference>
<dbReference type="PathwayCommons" id="Q3LI61"/>
<dbReference type="Reactome" id="R-HSA-6805567">
    <property type="pathway name" value="Keratinization"/>
</dbReference>
<dbReference type="BioGRID-ORCS" id="337976">
    <property type="hits" value="10 hits in 1102 CRISPR screens"/>
</dbReference>
<dbReference type="GenomeRNAi" id="337976"/>
<dbReference type="Pharos" id="Q3LI61">
    <property type="development level" value="Tdark"/>
</dbReference>
<dbReference type="PRO" id="PR:Q3LI61"/>
<dbReference type="Proteomes" id="UP000005640">
    <property type="component" value="Chromosome 21"/>
</dbReference>
<dbReference type="RNAct" id="Q3LI61">
    <property type="molecule type" value="protein"/>
</dbReference>
<dbReference type="Bgee" id="ENSG00000184032">
    <property type="expression patterns" value="Expressed in male germ line stem cell (sensu Vertebrata) in testis and 14 other cell types or tissues"/>
</dbReference>
<dbReference type="GO" id="GO:0005829">
    <property type="term" value="C:cytosol"/>
    <property type="evidence" value="ECO:0000304"/>
    <property type="project" value="Reactome"/>
</dbReference>
<dbReference type="GO" id="GO:0005882">
    <property type="term" value="C:intermediate filament"/>
    <property type="evidence" value="ECO:0007669"/>
    <property type="project" value="UniProtKB-KW"/>
</dbReference>
<dbReference type="InterPro" id="IPR052878">
    <property type="entry name" value="KRTAP_matrix"/>
</dbReference>
<dbReference type="InterPro" id="IPR021743">
    <property type="entry name" value="KRTAP_type8/19/20/21/22"/>
</dbReference>
<dbReference type="PANTHER" id="PTHR39653">
    <property type="entry name" value="KERATIN-ASSOCIATED PROTEIN 20-2"/>
    <property type="match status" value="1"/>
</dbReference>
<dbReference type="PANTHER" id="PTHR39653:SF6">
    <property type="entry name" value="KERATIN-ASSOCIATED PROTEIN 20-2"/>
    <property type="match status" value="1"/>
</dbReference>
<dbReference type="Pfam" id="PF11759">
    <property type="entry name" value="KRTAP"/>
    <property type="match status" value="1"/>
</dbReference>
<protein>
    <recommendedName>
        <fullName>Keratin-associated protein 20-2</fullName>
    </recommendedName>
</protein>
<accession>Q3LI61</accession>
<feature type="chain" id="PRO_0000223911" description="Keratin-associated protein 20-2">
    <location>
        <begin position="1"/>
        <end position="65"/>
    </location>
</feature>
<feature type="sequence variant" id="VAR_060060" description="In dbSNP:rs8132705.">
    <original>Y</original>
    <variation>H</variation>
    <location>
        <position position="7"/>
    </location>
</feature>
<feature type="sequence variant" id="VAR_060061" description="In dbSNP:rs8131539.">
    <original>Y</original>
    <variation>C</variation>
    <location>
        <position position="13"/>
    </location>
</feature>
<feature type="sequence variant" id="VAR_060062" description="In dbSNP:rs8132721.">
    <original>V</original>
    <variation>G</variation>
    <location>
        <position position="17"/>
    </location>
</feature>
<organism>
    <name type="scientific">Homo sapiens</name>
    <name type="common">Human</name>
    <dbReference type="NCBI Taxonomy" id="9606"/>
    <lineage>
        <taxon>Eukaryota</taxon>
        <taxon>Metazoa</taxon>
        <taxon>Chordata</taxon>
        <taxon>Craniata</taxon>
        <taxon>Vertebrata</taxon>
        <taxon>Euteleostomi</taxon>
        <taxon>Mammalia</taxon>
        <taxon>Eutheria</taxon>
        <taxon>Euarchontoglires</taxon>
        <taxon>Primates</taxon>
        <taxon>Haplorrhini</taxon>
        <taxon>Catarrhini</taxon>
        <taxon>Hominidae</taxon>
        <taxon>Homo</taxon>
    </lineage>
</organism>
<gene>
    <name type="primary">KRTAP20-2</name>
    <name type="synonym">KAP20.2</name>
</gene>